<accession>Q2RJL2</accession>
<proteinExistence type="inferred from homology"/>
<protein>
    <recommendedName>
        <fullName evidence="1">4-hydroxy-tetrahydrodipicolinate reductase</fullName>
        <shortName evidence="1">HTPA reductase</shortName>
        <ecNumber evidence="1">1.17.1.8</ecNumber>
    </recommendedName>
</protein>
<name>DAPB_MOOTA</name>
<keyword id="KW-0028">Amino-acid biosynthesis</keyword>
<keyword id="KW-0963">Cytoplasm</keyword>
<keyword id="KW-0220">Diaminopimelate biosynthesis</keyword>
<keyword id="KW-0457">Lysine biosynthesis</keyword>
<keyword id="KW-0520">NAD</keyword>
<keyword id="KW-0521">NADP</keyword>
<keyword id="KW-0560">Oxidoreductase</keyword>
<comment type="function">
    <text evidence="1">Catalyzes the conversion of 4-hydroxy-tetrahydrodipicolinate (HTPA) to tetrahydrodipicolinate.</text>
</comment>
<comment type="catalytic activity">
    <reaction evidence="1">
        <text>(S)-2,3,4,5-tetrahydrodipicolinate + NAD(+) + H2O = (2S,4S)-4-hydroxy-2,3,4,5-tetrahydrodipicolinate + NADH + H(+)</text>
        <dbReference type="Rhea" id="RHEA:35323"/>
        <dbReference type="ChEBI" id="CHEBI:15377"/>
        <dbReference type="ChEBI" id="CHEBI:15378"/>
        <dbReference type="ChEBI" id="CHEBI:16845"/>
        <dbReference type="ChEBI" id="CHEBI:57540"/>
        <dbReference type="ChEBI" id="CHEBI:57945"/>
        <dbReference type="ChEBI" id="CHEBI:67139"/>
        <dbReference type="EC" id="1.17.1.8"/>
    </reaction>
</comment>
<comment type="catalytic activity">
    <reaction evidence="1">
        <text>(S)-2,3,4,5-tetrahydrodipicolinate + NADP(+) + H2O = (2S,4S)-4-hydroxy-2,3,4,5-tetrahydrodipicolinate + NADPH + H(+)</text>
        <dbReference type="Rhea" id="RHEA:35331"/>
        <dbReference type="ChEBI" id="CHEBI:15377"/>
        <dbReference type="ChEBI" id="CHEBI:15378"/>
        <dbReference type="ChEBI" id="CHEBI:16845"/>
        <dbReference type="ChEBI" id="CHEBI:57783"/>
        <dbReference type="ChEBI" id="CHEBI:58349"/>
        <dbReference type="ChEBI" id="CHEBI:67139"/>
        <dbReference type="EC" id="1.17.1.8"/>
    </reaction>
</comment>
<comment type="pathway">
    <text evidence="1">Amino-acid biosynthesis; L-lysine biosynthesis via DAP pathway; (S)-tetrahydrodipicolinate from L-aspartate: step 4/4.</text>
</comment>
<comment type="subcellular location">
    <subcellularLocation>
        <location evidence="1">Cytoplasm</location>
    </subcellularLocation>
</comment>
<comment type="similarity">
    <text evidence="1">Belongs to the DapB family.</text>
</comment>
<comment type="caution">
    <text evidence="2">Was originally thought to be a dihydrodipicolinate reductase (DHDPR), catalyzing the conversion of dihydrodipicolinate to tetrahydrodipicolinate. However, it was shown in E.coli that the substrate of the enzymatic reaction is not dihydrodipicolinate (DHDP) but in fact (2S,4S)-4-hydroxy-2,3,4,5-tetrahydrodipicolinic acid (HTPA), the product released by the DapA-catalyzed reaction.</text>
</comment>
<feature type="chain" id="PRO_1000008595" description="4-hydroxy-tetrahydrodipicolinate reductase">
    <location>
        <begin position="1"/>
        <end position="267"/>
    </location>
</feature>
<feature type="active site" description="Proton donor/acceptor" evidence="1">
    <location>
        <position position="156"/>
    </location>
</feature>
<feature type="active site" description="Proton donor" evidence="1">
    <location>
        <position position="160"/>
    </location>
</feature>
<feature type="binding site" evidence="1">
    <location>
        <begin position="11"/>
        <end position="16"/>
    </location>
    <ligand>
        <name>NAD(+)</name>
        <dbReference type="ChEBI" id="CHEBI:57540"/>
    </ligand>
</feature>
<feature type="binding site" evidence="1">
    <location>
        <position position="39"/>
    </location>
    <ligand>
        <name>NADP(+)</name>
        <dbReference type="ChEBI" id="CHEBI:58349"/>
    </ligand>
</feature>
<feature type="binding site" evidence="1">
    <location>
        <begin position="100"/>
        <end position="102"/>
    </location>
    <ligand>
        <name>NAD(+)</name>
        <dbReference type="ChEBI" id="CHEBI:57540"/>
    </ligand>
</feature>
<feature type="binding site" evidence="1">
    <location>
        <begin position="126"/>
        <end position="129"/>
    </location>
    <ligand>
        <name>NAD(+)</name>
        <dbReference type="ChEBI" id="CHEBI:57540"/>
    </ligand>
</feature>
<feature type="binding site" evidence="1">
    <location>
        <position position="157"/>
    </location>
    <ligand>
        <name>(S)-2,3,4,5-tetrahydrodipicolinate</name>
        <dbReference type="ChEBI" id="CHEBI:16845"/>
    </ligand>
</feature>
<feature type="binding site" evidence="1">
    <location>
        <begin position="166"/>
        <end position="167"/>
    </location>
    <ligand>
        <name>(S)-2,3,4,5-tetrahydrodipicolinate</name>
        <dbReference type="ChEBI" id="CHEBI:16845"/>
    </ligand>
</feature>
<gene>
    <name evidence="1" type="primary">dapB</name>
    <name type="ordered locus">Moth_1063</name>
</gene>
<sequence>MIATIRVVVTGAAGRMGREMTRGLLQTEDIAVVGAVDRREVGVDIGSLNGLPPAGVIIQEDLAGVIASARPEVMVDFTVAAAALANARLAVEQGVSPVIGTTGISLERLDELHQLCEARQVGAVVAPNFSLGAILMMHFAEEAARYFPRAEIIEIHHDQKIDAPSGTALKTAELMAARVNRPLTPSPAEEKVAGARGATYQGLAVHSVRLPGAVAHQEVIFGGQGQLLTIRHDTTSREAFLPGLLLAIKKVRQLKGVVYGLENLLEF</sequence>
<dbReference type="EC" id="1.17.1.8" evidence="1"/>
<dbReference type="EMBL" id="CP000232">
    <property type="protein sequence ID" value="ABC19377.1"/>
    <property type="molecule type" value="Genomic_DNA"/>
</dbReference>
<dbReference type="RefSeq" id="YP_429920.1">
    <property type="nucleotide sequence ID" value="NC_007644.1"/>
</dbReference>
<dbReference type="SMR" id="Q2RJL2"/>
<dbReference type="STRING" id="264732.Moth_1063"/>
<dbReference type="EnsemblBacteria" id="ABC19377">
    <property type="protein sequence ID" value="ABC19377"/>
    <property type="gene ID" value="Moth_1063"/>
</dbReference>
<dbReference type="KEGG" id="mta:Moth_1063"/>
<dbReference type="PATRIC" id="fig|264732.11.peg.1144"/>
<dbReference type="eggNOG" id="COG0289">
    <property type="taxonomic scope" value="Bacteria"/>
</dbReference>
<dbReference type="HOGENOM" id="CLU_047479_0_1_9"/>
<dbReference type="OrthoDB" id="9790352at2"/>
<dbReference type="UniPathway" id="UPA00034">
    <property type="reaction ID" value="UER00018"/>
</dbReference>
<dbReference type="GO" id="GO:0005829">
    <property type="term" value="C:cytosol"/>
    <property type="evidence" value="ECO:0007669"/>
    <property type="project" value="TreeGrafter"/>
</dbReference>
<dbReference type="GO" id="GO:0008839">
    <property type="term" value="F:4-hydroxy-tetrahydrodipicolinate reductase"/>
    <property type="evidence" value="ECO:0007669"/>
    <property type="project" value="UniProtKB-EC"/>
</dbReference>
<dbReference type="GO" id="GO:0051287">
    <property type="term" value="F:NAD binding"/>
    <property type="evidence" value="ECO:0007669"/>
    <property type="project" value="UniProtKB-UniRule"/>
</dbReference>
<dbReference type="GO" id="GO:0050661">
    <property type="term" value="F:NADP binding"/>
    <property type="evidence" value="ECO:0007669"/>
    <property type="project" value="UniProtKB-UniRule"/>
</dbReference>
<dbReference type="GO" id="GO:0016726">
    <property type="term" value="F:oxidoreductase activity, acting on CH or CH2 groups, NAD or NADP as acceptor"/>
    <property type="evidence" value="ECO:0007669"/>
    <property type="project" value="UniProtKB-UniRule"/>
</dbReference>
<dbReference type="GO" id="GO:0019877">
    <property type="term" value="P:diaminopimelate biosynthetic process"/>
    <property type="evidence" value="ECO:0007669"/>
    <property type="project" value="UniProtKB-UniRule"/>
</dbReference>
<dbReference type="GO" id="GO:0009089">
    <property type="term" value="P:lysine biosynthetic process via diaminopimelate"/>
    <property type="evidence" value="ECO:0007669"/>
    <property type="project" value="UniProtKB-UniRule"/>
</dbReference>
<dbReference type="CDD" id="cd02274">
    <property type="entry name" value="DHDPR_N"/>
    <property type="match status" value="1"/>
</dbReference>
<dbReference type="FunFam" id="3.30.360.10:FF:000009">
    <property type="entry name" value="4-hydroxy-tetrahydrodipicolinate reductase"/>
    <property type="match status" value="1"/>
</dbReference>
<dbReference type="Gene3D" id="3.30.360.10">
    <property type="entry name" value="Dihydrodipicolinate Reductase, domain 2"/>
    <property type="match status" value="1"/>
</dbReference>
<dbReference type="Gene3D" id="3.40.50.720">
    <property type="entry name" value="NAD(P)-binding Rossmann-like Domain"/>
    <property type="match status" value="1"/>
</dbReference>
<dbReference type="HAMAP" id="MF_00102">
    <property type="entry name" value="DapB"/>
    <property type="match status" value="1"/>
</dbReference>
<dbReference type="InterPro" id="IPR022663">
    <property type="entry name" value="DapB_C"/>
</dbReference>
<dbReference type="InterPro" id="IPR000846">
    <property type="entry name" value="DapB_N"/>
</dbReference>
<dbReference type="InterPro" id="IPR022664">
    <property type="entry name" value="DapB_N_CS"/>
</dbReference>
<dbReference type="InterPro" id="IPR023940">
    <property type="entry name" value="DHDPR_bac"/>
</dbReference>
<dbReference type="InterPro" id="IPR036291">
    <property type="entry name" value="NAD(P)-bd_dom_sf"/>
</dbReference>
<dbReference type="NCBIfam" id="TIGR00036">
    <property type="entry name" value="dapB"/>
    <property type="match status" value="1"/>
</dbReference>
<dbReference type="PANTHER" id="PTHR20836:SF0">
    <property type="entry name" value="4-HYDROXY-TETRAHYDRODIPICOLINATE REDUCTASE 1, CHLOROPLASTIC-RELATED"/>
    <property type="match status" value="1"/>
</dbReference>
<dbReference type="PANTHER" id="PTHR20836">
    <property type="entry name" value="DIHYDRODIPICOLINATE REDUCTASE"/>
    <property type="match status" value="1"/>
</dbReference>
<dbReference type="Pfam" id="PF05173">
    <property type="entry name" value="DapB_C"/>
    <property type="match status" value="1"/>
</dbReference>
<dbReference type="Pfam" id="PF01113">
    <property type="entry name" value="DapB_N"/>
    <property type="match status" value="1"/>
</dbReference>
<dbReference type="PIRSF" id="PIRSF000161">
    <property type="entry name" value="DHPR"/>
    <property type="match status" value="1"/>
</dbReference>
<dbReference type="SUPFAM" id="SSF55347">
    <property type="entry name" value="Glyceraldehyde-3-phosphate dehydrogenase-like, C-terminal domain"/>
    <property type="match status" value="1"/>
</dbReference>
<dbReference type="SUPFAM" id="SSF51735">
    <property type="entry name" value="NAD(P)-binding Rossmann-fold domains"/>
    <property type="match status" value="1"/>
</dbReference>
<dbReference type="PROSITE" id="PS01298">
    <property type="entry name" value="DAPB"/>
    <property type="match status" value="1"/>
</dbReference>
<organism>
    <name type="scientific">Moorella thermoacetica (strain ATCC 39073 / JCM 9320)</name>
    <dbReference type="NCBI Taxonomy" id="264732"/>
    <lineage>
        <taxon>Bacteria</taxon>
        <taxon>Bacillati</taxon>
        <taxon>Bacillota</taxon>
        <taxon>Clostridia</taxon>
        <taxon>Moorellales</taxon>
        <taxon>Moorellaceae</taxon>
        <taxon>Moorella</taxon>
    </lineage>
</organism>
<evidence type="ECO:0000255" key="1">
    <source>
        <dbReference type="HAMAP-Rule" id="MF_00102"/>
    </source>
</evidence>
<evidence type="ECO:0000305" key="2"/>
<reference key="1">
    <citation type="journal article" date="2008" name="Environ. Microbiol.">
        <title>The complete genome sequence of Moorella thermoacetica (f. Clostridium thermoaceticum).</title>
        <authorList>
            <person name="Pierce E."/>
            <person name="Xie G."/>
            <person name="Barabote R.D."/>
            <person name="Saunders E."/>
            <person name="Han C.S."/>
            <person name="Detter J.C."/>
            <person name="Richardson P."/>
            <person name="Brettin T.S."/>
            <person name="Das A."/>
            <person name="Ljungdahl L.G."/>
            <person name="Ragsdale S.W."/>
        </authorList>
    </citation>
    <scope>NUCLEOTIDE SEQUENCE [LARGE SCALE GENOMIC DNA]</scope>
    <source>
        <strain>ATCC 39073 / JCM 9320</strain>
    </source>
</reference>